<proteinExistence type="evidence at transcript level"/>
<keyword id="KW-0012">Acyltransferase</keyword>
<keyword id="KW-0028">Amino-acid biosynthesis</keyword>
<keyword id="KW-0198">Cysteine biosynthesis</keyword>
<keyword id="KW-0963">Cytoplasm</keyword>
<keyword id="KW-0614">Plasmid</keyword>
<keyword id="KW-1185">Reference proteome</keyword>
<keyword id="KW-0677">Repeat</keyword>
<keyword id="KW-0808">Transferase</keyword>
<name>SRPH_SYNE7</name>
<reference key="1">
    <citation type="journal article" date="1995" name="Mol. Gen. Genet.">
        <title>Two enzymes together capable of cysteine biosynthesis are encoded on a cyanobacterial plasmid.</title>
        <authorList>
            <person name="Nicholson M.L."/>
            <person name="Gaasenbeek M."/>
            <person name="Laudenbach D.E."/>
        </authorList>
    </citation>
    <scope>NUCLEOTIDE SEQUENCE [GENOMIC DNA]</scope>
    <scope>INDUCTION BY SULFUR STARVATION</scope>
    <source>
        <strain>ATCC 33912 / PCC 7942 / FACHB-805</strain>
        <plasmid>pANL</plasmid>
    </source>
</reference>
<reference key="2">
    <citation type="submission" date="2004-05" db="EMBL/GenBank/DDBJ databases">
        <title>pANL, the large plasmid of Synechococcus elongatus PCC 7942.</title>
        <authorList>
            <person name="Holtman C.K."/>
            <person name="Chen Y."/>
            <person name="Sandoval P."/>
            <person name="Socias T."/>
            <person name="Mohler B.J."/>
            <person name="Youderian P."/>
            <person name="Golden S.S."/>
        </authorList>
    </citation>
    <scope>NUCLEOTIDE SEQUENCE [GENOMIC DNA]</scope>
    <source>
        <strain>ATCC 33912 / PCC 7942 / FACHB-805</strain>
        <plasmid>pANL</plasmid>
    </source>
</reference>
<reference key="3">
    <citation type="submission" date="2005-08" db="EMBL/GenBank/DDBJ databases">
        <title>Complete sequence of plasmid 1 of Synechococcus elongatus PCC 7942.</title>
        <authorList>
            <consortium name="US DOE Joint Genome Institute"/>
            <person name="Copeland A."/>
            <person name="Lucas S."/>
            <person name="Lapidus A."/>
            <person name="Barry K."/>
            <person name="Detter J.C."/>
            <person name="Glavina T."/>
            <person name="Hammon N."/>
            <person name="Israni S."/>
            <person name="Pitluck S."/>
            <person name="Schmutz J."/>
            <person name="Larimer F."/>
            <person name="Land M."/>
            <person name="Kyrpides N."/>
            <person name="Lykidis A."/>
            <person name="Golden S."/>
            <person name="Richardson P."/>
        </authorList>
    </citation>
    <scope>NUCLEOTIDE SEQUENCE [LARGE SCALE GENOMIC DNA]</scope>
    <source>
        <strain>ATCC 33912 / PCC 7942 / FACHB-805</strain>
        <plasmid>pANL</plasmid>
    </source>
</reference>
<protein>
    <recommendedName>
        <fullName>Serine acetyltransferase, plasmid</fullName>
        <shortName>SAT</shortName>
        <ecNumber>2.3.1.30</ecNumber>
    </recommendedName>
</protein>
<sequence>MSLSPRSDRTEIRRSWGLDSIVSALSQASTDPLPHHLLSDQFYPLPSRESLGLILHGLRSVLFPRHFGDPELSVETTHYFIGNTLDKTLNLLNEQIRRELWLQHVTQGTPEATPAVLSQHASELTQAFAQALPEIKRLLDSDVNAAYLGDPAAQSISEILFCYPGITAITFHRLAHRLYQLGLPLLARITAEVSHSETGIDIHPGAAIGGSFFIDHGTGVVIGETCVIGDRVRIYQAVTLGAKSFPRDETGALIKGQARHPVIEDDVVIYAGATLLGRITVGRGSTIGGNVWLTRSVPAGSFISQAQIRSDNFESGGGI</sequence>
<organism>
    <name type="scientific">Synechococcus elongatus (strain ATCC 33912 / PCC 7942 / FACHB-805)</name>
    <name type="common">Anacystis nidulans R2</name>
    <dbReference type="NCBI Taxonomy" id="1140"/>
    <lineage>
        <taxon>Bacteria</taxon>
        <taxon>Bacillati</taxon>
        <taxon>Cyanobacteriota</taxon>
        <taxon>Cyanophyceae</taxon>
        <taxon>Synechococcales</taxon>
        <taxon>Synechococcaceae</taxon>
        <taxon>Synechococcus</taxon>
    </lineage>
</organism>
<geneLocation type="plasmid">
    <name>pANL</name>
</geneLocation>
<accession>Q59967</accession>
<accession>Q7BA85</accession>
<evidence type="ECO:0000269" key="1">
    <source>
    </source>
</evidence>
<evidence type="ECO:0000305" key="2"/>
<gene>
    <name type="primary">srpH</name>
    <name type="ordered locus">Synpcc7942_B2663</name>
    <name type="ORF">pANL39</name>
</gene>
<comment type="catalytic activity">
    <reaction>
        <text>L-serine + acetyl-CoA = O-acetyl-L-serine + CoA</text>
        <dbReference type="Rhea" id="RHEA:24560"/>
        <dbReference type="ChEBI" id="CHEBI:33384"/>
        <dbReference type="ChEBI" id="CHEBI:57287"/>
        <dbReference type="ChEBI" id="CHEBI:57288"/>
        <dbReference type="ChEBI" id="CHEBI:58340"/>
        <dbReference type="EC" id="2.3.1.30"/>
    </reaction>
</comment>
<comment type="pathway">
    <text>Amino-acid biosynthesis; L-cysteine biosynthesis; L-cysteine from L-serine: step 1/2.</text>
</comment>
<comment type="subcellular location">
    <subcellularLocation>
        <location>Cytoplasm</location>
    </subcellularLocation>
</comment>
<comment type="induction">
    <text evidence="1">Transcriptionally induced in the absence of sulfur, requires CysR for transcription. Part of the srpG-srpH-srpI operon.</text>
</comment>
<comment type="similarity">
    <text evidence="2">Belongs to the transferase hexapeptide repeat family.</text>
</comment>
<feature type="chain" id="PRO_0000068688" description="Serine acetyltransferase, plasmid">
    <location>
        <begin position="1"/>
        <end position="319"/>
    </location>
</feature>
<dbReference type="EC" id="2.3.1.30"/>
<dbReference type="EMBL" id="U23436">
    <property type="protein sequence ID" value="AAA86726.1"/>
    <property type="molecule type" value="Genomic_DNA"/>
</dbReference>
<dbReference type="EMBL" id="AF441790">
    <property type="protein sequence ID" value="AAM81165.1"/>
    <property type="molecule type" value="Genomic_DNA"/>
</dbReference>
<dbReference type="EMBL" id="CP000101">
    <property type="protein sequence ID" value="ABB58692.1"/>
    <property type="molecule type" value="Genomic_DNA"/>
</dbReference>
<dbReference type="RefSeq" id="NP_665778.1">
    <property type="nucleotide sequence ID" value="NC_004073.2"/>
</dbReference>
<dbReference type="SMR" id="Q59967"/>
<dbReference type="PaxDb" id="1140-Synpcc7942_B2663"/>
<dbReference type="KEGG" id="syf:Synpcc7942_B2663"/>
<dbReference type="eggNOG" id="COG1045">
    <property type="taxonomic scope" value="Bacteria"/>
</dbReference>
<dbReference type="HOGENOM" id="CLU_051638_1_0_3"/>
<dbReference type="OrthoDB" id="9801456at2"/>
<dbReference type="BioCyc" id="SYNEL:SYNPCC7942_B2663-MONOMER"/>
<dbReference type="UniPathway" id="UPA00136">
    <property type="reaction ID" value="UER00199"/>
</dbReference>
<dbReference type="Proteomes" id="UP000889800">
    <property type="component" value="Plasmid pANL"/>
</dbReference>
<dbReference type="GO" id="GO:0031470">
    <property type="term" value="C:carboxysome"/>
    <property type="evidence" value="ECO:0007669"/>
    <property type="project" value="UniProtKB-ARBA"/>
</dbReference>
<dbReference type="GO" id="GO:0005737">
    <property type="term" value="C:cytoplasm"/>
    <property type="evidence" value="ECO:0007669"/>
    <property type="project" value="UniProtKB-SubCell"/>
</dbReference>
<dbReference type="GO" id="GO:0009001">
    <property type="term" value="F:serine O-acetyltransferase activity"/>
    <property type="evidence" value="ECO:0007669"/>
    <property type="project" value="UniProtKB-EC"/>
</dbReference>
<dbReference type="GO" id="GO:0043886">
    <property type="term" value="F:structural constituent of carboxysome shell"/>
    <property type="evidence" value="ECO:0007669"/>
    <property type="project" value="UniProtKB-ARBA"/>
</dbReference>
<dbReference type="GO" id="GO:0019344">
    <property type="term" value="P:cysteine biosynthetic process"/>
    <property type="evidence" value="ECO:0007669"/>
    <property type="project" value="UniProtKB-UniPathway"/>
</dbReference>
<dbReference type="CDD" id="cd03354">
    <property type="entry name" value="LbH_SAT"/>
    <property type="match status" value="1"/>
</dbReference>
<dbReference type="FunFam" id="2.160.10.10:FF:000015">
    <property type="entry name" value="Serine acetyltransferase, plasmid"/>
    <property type="match status" value="1"/>
</dbReference>
<dbReference type="Gene3D" id="2.160.10.10">
    <property type="entry name" value="Hexapeptide repeat proteins"/>
    <property type="match status" value="1"/>
</dbReference>
<dbReference type="Gene3D" id="1.10.3130.10">
    <property type="entry name" value="serine acetyltransferase, domain 1"/>
    <property type="match status" value="1"/>
</dbReference>
<dbReference type="InterPro" id="IPR001451">
    <property type="entry name" value="Hexapep"/>
</dbReference>
<dbReference type="InterPro" id="IPR045304">
    <property type="entry name" value="LbH_SAT"/>
</dbReference>
<dbReference type="InterPro" id="IPR042122">
    <property type="entry name" value="Ser_AcTrfase_N_sf"/>
</dbReference>
<dbReference type="InterPro" id="IPR053376">
    <property type="entry name" value="Serine_acetyltransferase"/>
</dbReference>
<dbReference type="InterPro" id="IPR011004">
    <property type="entry name" value="Trimer_LpxA-like_sf"/>
</dbReference>
<dbReference type="NCBIfam" id="NF041874">
    <property type="entry name" value="EPS_EpsC"/>
    <property type="match status" value="1"/>
</dbReference>
<dbReference type="PANTHER" id="PTHR42811">
    <property type="entry name" value="SERINE ACETYLTRANSFERASE"/>
    <property type="match status" value="1"/>
</dbReference>
<dbReference type="Pfam" id="PF00132">
    <property type="entry name" value="Hexapep"/>
    <property type="match status" value="1"/>
</dbReference>
<dbReference type="SUPFAM" id="SSF51161">
    <property type="entry name" value="Trimeric LpxA-like enzymes"/>
    <property type="match status" value="1"/>
</dbReference>